<reference key="1">
    <citation type="journal article" date="1986" name="J. Mol. Biol.">
        <title>DNA sequence of the tail fiber genes 37, encoding the receptor recognizing part of the fiber, of bacteriophages T2 and K3.</title>
        <authorList>
            <person name="Riede I."/>
            <person name="Drexler K."/>
            <person name="Eschbach M.-L."/>
            <person name="Henning U."/>
        </authorList>
    </citation>
    <scope>NUCLEOTIDE SEQUENCE [GENOMIC DNA]</scope>
</reference>
<gene>
    <name type="primary">37</name>
</gene>
<comment type="function">
    <molecule>Mature tail fiber protein Gp37</molecule>
    <text evidence="1">Constitues the trimeric tip of the long tail fiber that mediates the attachment to the host receptor, together with the receptor-recognizing protein Gp38.</text>
</comment>
<comment type="function">
    <molecule>Intramolecular chaperone</molecule>
    <text evidence="2">The C-terminal chaperone protein mediates homotrimerization and proper folding of the catalytic trimer.</text>
</comment>
<comment type="subunit">
    <text evidence="1">Homotrimer. Interacts with the receptor-recognizing protein Gp38.</text>
</comment>
<comment type="subcellular location">
    <subcellularLocation>
        <location evidence="1">Virion</location>
    </subcellularLocation>
</comment>
<comment type="PTM">
    <text evidence="1">Proteolytic cleavage and release of the chaperone in the host cytosol stabilizes the folded protein.</text>
</comment>
<comment type="similarity">
    <text evidence="4">Belongs to the S16-like long tail fiber protein Gp37 family.</text>
</comment>
<sequence length="1341" mass="143153">MATLKQIQFKRSKTAGARPAASVLAEGELAINLKDRTIFTKDDSGNIIDLSISAGGNISGNITQTGDYTQTGKFNLIGPQIVASGGYIEFNYRTTGSGAWSGQHTAKAPIFVDLSSATSTSEYNPIIKQRFKDGTFSLGTLVSEGSLKIHYINESGDSKYWTFRRDGGFTVDGGGLGVSGGSITTSGNIAALGNITSPQINTKNIILDTKAFGQYDSQSLVQYVYPGTGEENGINYLRKVRAKSGGTIYHEIASAQTGKNDEISWWTGNTLTTKLMGLRNDGAMVLRRSLAIGTITADENTNNYGSPTPMGERYIALGDAATGLKYIKQGVYDLVGNWNSVASITPDSFRSTRKALFGRSEDQGGTWTMPGTNAALLSVQTQADVNNAGDGQTHIGYNSGGKMSHYFRGKGQTNINTQKGMEVNPGILKLVTDSNNVQFYANGTVSSIQRIKFDNGLVLTGARPDGIQLDAPTAADGTKTILWAGGTRAGQNKSYVSIKAWGNSFNASGDRARETVFEVGDGQGFHFYSQRVAPAPGSTVGPIQLRVNGGLLTAGSIVASGSITTESSLNVNNGLSVNGQAKFGGTANALRIWNAEYGVIFRRSESNFYIIPTNQNEGESGDIHSSLRPVRIGLNDGAVGLGRDSFIVDQNNALTTINSNSRINANFRMQLGQSTYIDAECTDTVRPAGAGSFVSQNNENVRAPFYMNINRTDTSTYVPILKQRYVQGNSCYSLGTLISTGDFRIHYHEGGDNGSTGPQKADLAWQFRRDGSFRSPNKIEINAVTIGTDGNITGGTGNFANLNTTLNRKTTVGGWAGSSVVGWYKFATVTIPQSTGTVTFKISGGAGFNFKSYNQASIAEIVLRTGNNPKGINAVLWNRSDLSFNQIATMNTSDDTYDVYVFCEGYTNALIVEYSCSENSSVTVVGLNGGIQPVVDALPEGHVVGKTVRLLNNIGGTFAAGESDIVTRGEYVADNQKGMRIKSNGNNIGSNAAILRNDGGSFYILATDKNTAEKSDAANGDWNGLRPFAINMADGRVGMNHGLNITGGGLNVTGGLNVTSGNTSLGNISSRVVARWRGASGWADNSDTMKSKITFMADHGDLSNSDSYYPIVGAYSNYGSAGYRQTFEFGWVGSGTTAGWRDGIIRIRGDNANGQQARWRFTMDGTLDCPGKVLLPQTGAFGVNTSNGLGGNSITFGDSDTGIKQNGDGLLDIYANSVQVFRFQNGDLYSYKNINAPNVYIRSDIRLKSNFKPIENALDKVEKLNGVIYDKAEYIGGEAIETEAGIVAQTLQDVLPEAVRETEDSKGNKILTVSSQAQIALLVEAVKTLSARVKELESKLM</sequence>
<protein>
    <recommendedName>
        <fullName evidence="4">Long tail fiber protein Gp37</fullName>
    </recommendedName>
    <alternativeName>
        <fullName evidence="4">Gene product 37</fullName>
        <shortName evidence="4">gp37</shortName>
    </alternativeName>
    <alternativeName>
        <fullName evidence="4">Receptor-recognizing protein</fullName>
    </alternativeName>
    <component>
        <recommendedName>
            <fullName evidence="4">Mature tail fiber protein Gp37</fullName>
        </recommendedName>
    </component>
    <component>
        <recommendedName>
            <fullName evidence="4">Intramolecular chaperone</fullName>
        </recommendedName>
    </component>
</protein>
<accession>P07067</accession>
<keyword id="KW-0945">Host-virus interaction</keyword>
<keyword id="KW-1161">Viral attachment to host cell</keyword>
<keyword id="KW-1230">Viral tail fiber protein</keyword>
<keyword id="KW-1227">Viral tail protein</keyword>
<keyword id="KW-0946">Virion</keyword>
<keyword id="KW-1160">Virus entry into host cell</keyword>
<evidence type="ECO:0000250" key="1">
    <source>
        <dbReference type="UniProtKB" id="M1EAS5"/>
    </source>
</evidence>
<evidence type="ECO:0000250" key="2">
    <source>
        <dbReference type="UniProtKB" id="Q04830"/>
    </source>
</evidence>
<evidence type="ECO:0000255" key="3">
    <source>
        <dbReference type="PROSITE-ProRule" id="PRU01025"/>
    </source>
</evidence>
<evidence type="ECO:0000305" key="4"/>
<organismHost>
    <name type="scientific">Escherichia coli</name>
    <dbReference type="NCBI Taxonomy" id="562"/>
</organismHost>
<feature type="chain" id="PRO_0000165031" description="Long tail fiber protein Gp37">
    <location>
        <begin position="1"/>
        <end position="1341"/>
    </location>
</feature>
<feature type="chain" id="PRO_0000458683" description="Mature tail fiber protein Gp37" evidence="1">
    <location>
        <begin position="1"/>
        <end position="1243"/>
    </location>
</feature>
<feature type="chain" id="PRO_0000458684" description="Intramolecular chaperone" evidence="1">
    <location>
        <begin position="1244"/>
        <end position="1341"/>
    </location>
</feature>
<feature type="domain" description="Peptidase S74" evidence="3">
    <location>
        <begin position="1243"/>
        <end position="1340"/>
    </location>
</feature>
<feature type="region of interest" description="Interaction with the receptor-recognizing protein gp38" evidence="1">
    <location>
        <begin position="1238"/>
        <end position="1241"/>
    </location>
</feature>
<feature type="site" description="Cleavage; by autolysis" evidence="1">
    <location>
        <begin position="1243"/>
        <end position="1244"/>
    </location>
</feature>
<dbReference type="EMBL" id="X04442">
    <property type="protein sequence ID" value="CAA28038.1"/>
    <property type="molecule type" value="Genomic_DNA"/>
</dbReference>
<dbReference type="PIR" id="S09579">
    <property type="entry name" value="S09579"/>
</dbReference>
<dbReference type="RefSeq" id="YP_010073897.1">
    <property type="nucleotide sequence ID" value="NC_054931.1"/>
</dbReference>
<dbReference type="SMR" id="P07067"/>
<dbReference type="GeneID" id="65062620"/>
<dbReference type="GO" id="GO:0098024">
    <property type="term" value="C:virus tail, fiber"/>
    <property type="evidence" value="ECO:0007669"/>
    <property type="project" value="UniProtKB-KW"/>
</dbReference>
<dbReference type="GO" id="GO:0046718">
    <property type="term" value="P:symbiont entry into host cell"/>
    <property type="evidence" value="ECO:0007669"/>
    <property type="project" value="UniProtKB-KW"/>
</dbReference>
<dbReference type="GO" id="GO:0019062">
    <property type="term" value="P:virion attachment to host cell"/>
    <property type="evidence" value="ECO:0007669"/>
    <property type="project" value="UniProtKB-KW"/>
</dbReference>
<dbReference type="InterPro" id="IPR048390">
    <property type="entry name" value="Gp34_trimer"/>
</dbReference>
<dbReference type="InterPro" id="IPR030392">
    <property type="entry name" value="S74_ICA"/>
</dbReference>
<dbReference type="Pfam" id="PF21446">
    <property type="entry name" value="Gp34_trimer"/>
    <property type="match status" value="2"/>
</dbReference>
<dbReference type="Pfam" id="PF13884">
    <property type="entry name" value="Peptidase_S74"/>
    <property type="match status" value="1"/>
</dbReference>
<dbReference type="PROSITE" id="PS51688">
    <property type="entry name" value="ICA"/>
    <property type="match status" value="1"/>
</dbReference>
<organism>
    <name type="scientific">Enterobacteria phage T2</name>
    <name type="common">Bacteriophage T2</name>
    <dbReference type="NCBI Taxonomy" id="2060721"/>
    <lineage>
        <taxon>Viruses</taxon>
        <taxon>Duplodnaviria</taxon>
        <taxon>Heunggongvirae</taxon>
        <taxon>Uroviricota</taxon>
        <taxon>Caudoviricetes</taxon>
        <taxon>Straboviridae</taxon>
        <taxon>Tevenvirinae</taxon>
        <taxon>Tequatrovirus</taxon>
        <taxon>Tequatrovirus T2</taxon>
    </lineage>
</organism>
<proteinExistence type="inferred from homology"/>
<name>FIB37_BPT2</name>